<reference key="1">
    <citation type="journal article" date="2004" name="Science">
        <title>Niemann-Pick C1 like 1 protein is critical for intestinal cholesterol absorption.</title>
        <authorList>
            <person name="Altmann S.W."/>
            <person name="Davis H.R. Jr."/>
            <person name="Zhu L.-J."/>
            <person name="Yao X."/>
            <person name="Hoos L.M."/>
            <person name="Tetzloff G."/>
            <person name="Iyer S.P.N."/>
            <person name="Maguire M."/>
            <person name="Golovko A."/>
            <person name="Zeng M."/>
            <person name="Wang L."/>
            <person name="Murgolo N."/>
            <person name="Graziano M.P."/>
        </authorList>
    </citation>
    <scope>NUCLEOTIDE SEQUENCE [MRNA]</scope>
    <scope>TISSUE SPECIFICITY</scope>
    <scope>SUBCELLULAR LOCATION</scope>
    <source>
        <strain>Sprague-Dawley</strain>
    </source>
</reference>
<reference key="2">
    <citation type="journal article" date="2005" name="Biochim. Biophys. Acta">
        <title>Characterization of the putative native and recombinant rat sterol transporter Niemann-Pick C1 Like 1 (NPC1L1) protein.</title>
        <authorList>
            <person name="Iyer S.P.N."/>
            <person name="Yao X."/>
            <person name="Crona J.H."/>
            <person name="Hoos L.M."/>
            <person name="Tetzloff G."/>
            <person name="Davis H.R. Jr."/>
            <person name="Graziano M.P."/>
            <person name="Altmann S.W."/>
        </authorList>
    </citation>
    <scope>SUBCELLULAR LOCATION</scope>
    <scope>CHARACTERIZATION</scope>
</reference>
<reference key="3">
    <citation type="journal article" date="2005" name="Proc. Natl. Acad. Sci. U.S.A.">
        <title>The target of ezetimibe is Niemann-Pick C1-like 1 (NPC1L1).</title>
        <authorList>
            <person name="Garcia-Calvo M."/>
            <person name="Lisnock J."/>
            <person name="Bull H.G."/>
            <person name="Hawes B.E."/>
            <person name="Burnett D.A."/>
            <person name="Braun M.P."/>
            <person name="Crona J.H."/>
            <person name="Davis H.R. Jr."/>
            <person name="Dean D.C."/>
            <person name="Detmers P.A."/>
            <person name="Graziano M.P."/>
            <person name="Hughes M."/>
            <person name="MacIntyre D.E."/>
            <person name="Ogawa A."/>
            <person name="O'neill K.A."/>
            <person name="Iyer S.P.N."/>
            <person name="Shevell D.E."/>
            <person name="Smith M.M."/>
            <person name="Tang Y.S."/>
            <person name="Makarewicz A.M."/>
            <person name="Ujjainwalla F."/>
            <person name="Altmann S.W."/>
            <person name="Chapman K.T."/>
            <person name="Thornberry N.A."/>
        </authorList>
    </citation>
    <scope>FUNCTION</scope>
</reference>
<reference key="4">
    <citation type="journal article" date="2007" name="J. Pharmacol. Exp. Ther.">
        <title>Niemann-Pick C1-like 1 overexpression facilitates ezetimibe-sensitive cholesterol and beta-sitosterol uptake in CaCo-2 cells.</title>
        <authorList>
            <person name="Yamanashi Y."/>
            <person name="Takada T."/>
            <person name="Suzuki H."/>
        </authorList>
    </citation>
    <scope>FUNCTION</scope>
    <scope>CATALYTIC ACTIVITY</scope>
    <scope>SUBCELLULAR LOCATION</scope>
</reference>
<reference key="5">
    <citation type="journal article" date="2018" name="Science">
        <title>A LIMA1 variant promotes low plasma LDL cholesterol and decreases intestinal cholesterol absorption.</title>
        <authorList>
            <person name="Zhang Y.Y."/>
            <person name="Fu Z.Y."/>
            <person name="Wei J."/>
            <person name="Qi W."/>
            <person name="Baituola G."/>
            <person name="Luo J."/>
            <person name="Meng Y.J."/>
            <person name="Guo S.Y."/>
            <person name="Yin H."/>
            <person name="Jiang S.Y."/>
            <person name="Li Y.F."/>
            <person name="Miao H.H."/>
            <person name="Liu Y."/>
            <person name="Wang Y."/>
            <person name="Li B.L."/>
            <person name="Ma Y.T."/>
            <person name="Song B.L."/>
        </authorList>
    </citation>
    <scope>SUBCELLULAR LOCATION</scope>
</reference>
<comment type="function">
    <text evidence="3 4 8 9">Plays a major role in cholesterol homeostasis (PubMed:17135346). Critical for the uptake of cholesterol across the plasma membrane of the intestinal enterocyte (PubMed:17135346). Involved in plant sterol absorption, it transports sitosterol, although at lower rates than cholesterol (PubMed:17135346). Is the direct molecular target of ezetimibe, a drug that inhibits cholesterol absorption and is approved for the treatment of hypercholesterolemia (PubMed:15928087). May have a function in the transport of multiple lipids and their homeostasis, thereby influencing lipid metabolism regulation (By similarity). May be involved in caveolin trafficking from the plasma membrane (By similarity). Acts as a negative regulator of NPC2 and down-regulates its expression and secretion by inhibiting its maturation and accelerating its degradation (By similarity).</text>
</comment>
<comment type="catalytic activity">
    <reaction evidence="9">
        <text>cholesterol(in) = cholesterol(out)</text>
        <dbReference type="Rhea" id="RHEA:39747"/>
        <dbReference type="ChEBI" id="CHEBI:16113"/>
    </reaction>
</comment>
<comment type="catalytic activity">
    <reaction evidence="9">
        <text>sitosterol(out) = sitosterol(in)</text>
        <dbReference type="Rhea" id="RHEA:70723"/>
        <dbReference type="ChEBI" id="CHEBI:27693"/>
    </reaction>
</comment>
<comment type="subunit">
    <text evidence="1 3">Interacts with RAB11A, MYO5B and RAB11FIP2. Interaction with RAB11A, MYO5B and RAB11FIP2 is required for proper transport to the plasma membrane upon cholesterol depletion (By similarity). Interacts with NPC2 (By similarity). Interacts with LIMA1 (By similarity).</text>
</comment>
<comment type="subcellular location">
    <subcellularLocation>
        <location evidence="9">Apical cell membrane</location>
        <topology>Multi-pass membrane protein</topology>
    </subcellularLocation>
    <subcellularLocation>
        <location evidence="10">Cell membrane</location>
        <topology>Multi-pass membrane protein</topology>
    </subcellularLocation>
    <text evidence="7">Subfractionation of brush border membranes from proximal enterocytes suggests considerable association with the apical membrane fraction. Exists as a predominantly cell surface membrane expressed protein.</text>
</comment>
<comment type="tissue specificity">
    <text evidence="7">Small intestine showed the highest level of expression (PubMed:14976318). Expression in other tissues including gall bladder, liver, testis and stomach is also observed (PubMed:14976318). Along the duodenum-ileum axis, the levels vary in different segments of the intestine with peak expression in the proximal jejunum (PubMed:14976318). Protein expression is confined to the enterocyte (PubMed:14976318). Discrete localization to the epithelial layer bordering the luminal space along the crypt-villus axis (PubMed:14976318). Protein expression in the enterocyte is observed closest to the luminal space. Expression in enterocytes from the proximal (jejunum) but not in the distal (ileum) region (PubMed:14976318).</text>
</comment>
<comment type="PTM">
    <text>Highly glycosylated.</text>
</comment>
<comment type="similarity">
    <text evidence="13">Belongs to the patched family.</text>
</comment>
<evidence type="ECO:0000250" key="1"/>
<evidence type="ECO:0000250" key="2">
    <source>
        <dbReference type="UniProtKB" id="O15118"/>
    </source>
</evidence>
<evidence type="ECO:0000250" key="3">
    <source>
        <dbReference type="UniProtKB" id="Q6T3U4"/>
    </source>
</evidence>
<evidence type="ECO:0000250" key="4">
    <source>
        <dbReference type="UniProtKB" id="Q9UHC9"/>
    </source>
</evidence>
<evidence type="ECO:0000255" key="5"/>
<evidence type="ECO:0000255" key="6">
    <source>
        <dbReference type="PROSITE-ProRule" id="PRU00199"/>
    </source>
</evidence>
<evidence type="ECO:0000269" key="7">
    <source>
    </source>
</evidence>
<evidence type="ECO:0000269" key="8">
    <source>
    </source>
</evidence>
<evidence type="ECO:0000269" key="9">
    <source>
    </source>
</evidence>
<evidence type="ECO:0000269" key="10">
    <source>
    </source>
</evidence>
<evidence type="ECO:0000303" key="11">
    <source>
    </source>
</evidence>
<evidence type="ECO:0000303" key="12">
    <source>
    </source>
</evidence>
<evidence type="ECO:0000305" key="13"/>
<evidence type="ECO:0000312" key="14">
    <source>
        <dbReference type="RGD" id="1303135"/>
    </source>
</evidence>
<evidence type="ECO:0007829" key="15">
    <source>
        <dbReference type="PDB" id="6V3H"/>
    </source>
</evidence>
<proteinExistence type="evidence at protein level"/>
<protein>
    <recommendedName>
        <fullName evidence="14">NPC1-like intracellular cholesterol transporter 1</fullName>
        <shortName evidence="12">Npc1l1</shortName>
    </recommendedName>
    <alternativeName>
        <fullName evidence="11">Niemann-Pick C1-like protein 1</fullName>
    </alternativeName>
</protein>
<name>NPCL1_RAT</name>
<accession>Q6T3U3</accession>
<keyword id="KW-0002">3D-structure</keyword>
<keyword id="KW-1003">Cell membrane</keyword>
<keyword id="KW-0153">Cholesterol metabolism</keyword>
<keyword id="KW-1015">Disulfide bond</keyword>
<keyword id="KW-0325">Glycoprotein</keyword>
<keyword id="KW-0443">Lipid metabolism</keyword>
<keyword id="KW-0472">Membrane</keyword>
<keyword id="KW-1185">Reference proteome</keyword>
<keyword id="KW-0732">Signal</keyword>
<keyword id="KW-0753">Steroid metabolism</keyword>
<keyword id="KW-1207">Sterol metabolism</keyword>
<keyword id="KW-0812">Transmembrane</keyword>
<keyword id="KW-1133">Transmembrane helix</keyword>
<keyword id="KW-0813">Transport</keyword>
<feature type="signal peptide" evidence="5">
    <location>
        <begin position="1"/>
        <end position="20"/>
    </location>
</feature>
<feature type="chain" id="PRO_0000023268" description="NPC1-like intracellular cholesterol transporter 1">
    <location>
        <begin position="21"/>
        <end position="1331"/>
    </location>
</feature>
<feature type="topological domain" description="Extracellular" evidence="5">
    <location>
        <begin position="21"/>
        <end position="282"/>
    </location>
</feature>
<feature type="transmembrane region" description="Helical; Name=1" evidence="5">
    <location>
        <begin position="283"/>
        <end position="303"/>
    </location>
</feature>
<feature type="topological domain" description="Cytoplasmic" evidence="5">
    <location>
        <begin position="304"/>
        <end position="352"/>
    </location>
</feature>
<feature type="transmembrane region" description="Helical; Name=2" evidence="5">
    <location>
        <begin position="353"/>
        <end position="373"/>
    </location>
</feature>
<feature type="topological domain" description="Extracellular" evidence="5">
    <location>
        <begin position="374"/>
        <end position="632"/>
    </location>
</feature>
<feature type="transmembrane region" description="Helical; Name=3" evidence="5">
    <location>
        <begin position="633"/>
        <end position="653"/>
    </location>
</feature>
<feature type="topological domain" description="Cytoplasmic" evidence="5">
    <location>
        <begin position="654"/>
        <end position="665"/>
    </location>
</feature>
<feature type="transmembrane region" description="Helical; Name=4" evidence="5">
    <location>
        <begin position="666"/>
        <end position="686"/>
    </location>
</feature>
<feature type="topological domain" description="Extracellular" evidence="5">
    <location>
        <begin position="687"/>
        <end position="696"/>
    </location>
</feature>
<feature type="transmembrane region" description="Helical; Name=5" evidence="5">
    <location>
        <begin position="697"/>
        <end position="717"/>
    </location>
</feature>
<feature type="topological domain" description="Cytoplasmic" evidence="5">
    <location>
        <begin position="718"/>
        <end position="742"/>
    </location>
</feature>
<feature type="transmembrane region" description="Helical; Name=6" evidence="5">
    <location>
        <begin position="743"/>
        <end position="763"/>
    </location>
</feature>
<feature type="topological domain" description="Extracellular" evidence="5">
    <location>
        <begin position="764"/>
        <end position="776"/>
    </location>
</feature>
<feature type="transmembrane region" description="Helical; Name=7" evidence="5">
    <location>
        <begin position="777"/>
        <end position="797"/>
    </location>
</feature>
<feature type="topological domain" description="Cytoplasmic" evidence="5">
    <location>
        <begin position="798"/>
        <end position="846"/>
    </location>
</feature>
<feature type="transmembrane region" description="Helical; Name=8" evidence="5">
    <location>
        <begin position="847"/>
        <end position="867"/>
    </location>
</feature>
<feature type="topological domain" description="Extracellular" evidence="5">
    <location>
        <begin position="868"/>
        <end position="1113"/>
    </location>
</feature>
<feature type="transmembrane region" description="Helical; Name=9" evidence="5">
    <location>
        <begin position="1114"/>
        <end position="1134"/>
    </location>
</feature>
<feature type="topological domain" description="Cytoplasmic" evidence="5">
    <location>
        <begin position="1135"/>
        <end position="1142"/>
    </location>
</feature>
<feature type="transmembrane region" description="Helical; Name=10" evidence="5">
    <location>
        <begin position="1143"/>
        <end position="1163"/>
    </location>
</feature>
<feature type="topological domain" description="Extracellular" evidence="5">
    <location>
        <begin position="1164"/>
        <end position="1165"/>
    </location>
</feature>
<feature type="transmembrane region" description="Helical; Name=11" evidence="5">
    <location>
        <begin position="1166"/>
        <end position="1186"/>
    </location>
</feature>
<feature type="topological domain" description="Cytoplasmic" evidence="5">
    <location>
        <begin position="1187"/>
        <end position="1206"/>
    </location>
</feature>
<feature type="transmembrane region" description="Helical; Name=12" evidence="5">
    <location>
        <begin position="1207"/>
        <end position="1227"/>
    </location>
</feature>
<feature type="topological domain" description="Extracellular" evidence="5">
    <location>
        <begin position="1228"/>
        <end position="1242"/>
    </location>
</feature>
<feature type="transmembrane region" description="Helical; Name=13" evidence="5">
    <location>
        <begin position="1243"/>
        <end position="1263"/>
    </location>
</feature>
<feature type="topological domain" description="Cytoplasmic" evidence="5">
    <location>
        <begin position="1264"/>
        <end position="1331"/>
    </location>
</feature>
<feature type="domain" description="SSD" evidence="6">
    <location>
        <begin position="632"/>
        <end position="797"/>
    </location>
</feature>
<feature type="glycosylation site" description="N-linked (GlcNAc...) asparagine" evidence="5">
    <location>
        <position position="53"/>
    </location>
</feature>
<feature type="glycosylation site" description="N-linked (GlcNAc...) asparagine" evidence="5">
    <location>
        <position position="85"/>
    </location>
</feature>
<feature type="glycosylation site" description="N-linked (GlcNAc...) asparagine" evidence="5">
    <location>
        <position position="138"/>
    </location>
</feature>
<feature type="glycosylation site" description="N-linked (GlcNAc...) asparagine" evidence="5">
    <location>
        <position position="244"/>
    </location>
</feature>
<feature type="glycosylation site" description="N-linked (GlcNAc...) asparagine" evidence="5">
    <location>
        <position position="416"/>
    </location>
</feature>
<feature type="glycosylation site" description="N-linked (GlcNAc...) asparagine" evidence="5">
    <location>
        <position position="431"/>
    </location>
</feature>
<feature type="glycosylation site" description="N-linked (GlcNAc...) asparagine" evidence="5">
    <location>
        <position position="464"/>
    </location>
</feature>
<feature type="glycosylation site" description="N-linked (GlcNAc...) asparagine" evidence="5">
    <location>
        <position position="479"/>
    </location>
</feature>
<feature type="glycosylation site" description="N-linked (GlcNAc...) asparagine" evidence="5">
    <location>
        <position position="497"/>
    </location>
</feature>
<feature type="glycosylation site" description="N-linked (GlcNAc...) asparagine" evidence="5">
    <location>
        <position position="506"/>
    </location>
</feature>
<feature type="glycosylation site" description="N-linked (GlcNAc...) asparagine" evidence="5">
    <location>
        <position position="606"/>
    </location>
</feature>
<feature type="glycosylation site" description="N-linked (GlcNAc...) asparagine" evidence="5">
    <location>
        <position position="626"/>
    </location>
</feature>
<feature type="glycosylation site" description="N-linked (GlcNAc...) asparagine" evidence="5">
    <location>
        <position position="909"/>
    </location>
</feature>
<feature type="glycosylation site" description="N-linked (GlcNAc...) asparagine" evidence="5">
    <location>
        <position position="917"/>
    </location>
</feature>
<feature type="glycosylation site" description="N-linked (GlcNAc...) asparagine" evidence="5">
    <location>
        <position position="996"/>
    </location>
</feature>
<feature type="glycosylation site" description="N-linked (GlcNAc...) asparagine" evidence="5">
    <location>
        <position position="1038"/>
    </location>
</feature>
<feature type="glycosylation site" description="N-linked (GlcNAc...) asparagine" evidence="5">
    <location>
        <position position="1076"/>
    </location>
</feature>
<feature type="disulfide bond" evidence="4">
    <location>
        <begin position="32"/>
        <end position="90"/>
    </location>
</feature>
<feature type="disulfide bond" evidence="4">
    <location>
        <begin position="38"/>
        <end position="56"/>
    </location>
</feature>
<feature type="disulfide bond" evidence="4">
    <location>
        <begin position="77"/>
        <end position="125"/>
    </location>
</feature>
<feature type="disulfide bond" evidence="4">
    <location>
        <begin position="91"/>
        <end position="129"/>
    </location>
</feature>
<feature type="disulfide bond" evidence="4">
    <location>
        <begin position="113"/>
        <end position="254"/>
    </location>
</feature>
<feature type="disulfide bond" evidence="4">
    <location>
        <begin position="116"/>
        <end position="172"/>
    </location>
</feature>
<feature type="disulfide bond" evidence="4">
    <location>
        <begin position="189"/>
        <end position="197"/>
    </location>
</feature>
<feature type="disulfide bond" evidence="4">
    <location>
        <begin position="243"/>
        <end position="259"/>
    </location>
</feature>
<feature type="disulfide bond" evidence="4">
    <location>
        <begin position="256"/>
        <end position="263"/>
    </location>
</feature>
<feature type="disulfide bond" evidence="2">
    <location>
        <begin position="471"/>
        <end position="485"/>
    </location>
</feature>
<feature type="disulfide bond" evidence="2">
    <location>
        <begin position="525"/>
        <end position="542"/>
    </location>
</feature>
<feature type="disulfide bond" evidence="2">
    <location>
        <begin position="920"/>
        <end position="925"/>
    </location>
</feature>
<feature type="disulfide bond" evidence="2">
    <location>
        <begin position="967"/>
        <end position="1025"/>
    </location>
</feature>
<feature type="disulfide bond" evidence="2">
    <location>
        <begin position="981"/>
        <end position="990"/>
    </location>
</feature>
<feature type="strand" evidence="15">
    <location>
        <begin position="28"/>
        <end position="37"/>
    </location>
</feature>
<feature type="turn" evidence="15">
    <location>
        <begin position="42"/>
        <end position="44"/>
    </location>
</feature>
<feature type="strand" evidence="15">
    <location>
        <begin position="55"/>
        <end position="61"/>
    </location>
</feature>
<feature type="helix" evidence="15">
    <location>
        <begin position="67"/>
        <end position="76"/>
    </location>
</feature>
<feature type="turn" evidence="15">
    <location>
        <begin position="83"/>
        <end position="86"/>
    </location>
</feature>
<feature type="helix" evidence="15">
    <location>
        <begin position="93"/>
        <end position="102"/>
    </location>
</feature>
<feature type="helix" evidence="15">
    <location>
        <begin position="104"/>
        <end position="110"/>
    </location>
</feature>
<feature type="helix" evidence="15">
    <location>
        <begin position="114"/>
        <end position="129"/>
    </location>
</feature>
<feature type="helix" evidence="15">
    <location>
        <begin position="133"/>
        <end position="135"/>
    </location>
</feature>
<feature type="strand" evidence="15">
    <location>
        <begin position="137"/>
        <end position="143"/>
    </location>
</feature>
<feature type="strand" evidence="15">
    <location>
        <begin position="152"/>
        <end position="161"/>
    </location>
</feature>
<feature type="helix" evidence="15">
    <location>
        <begin position="162"/>
        <end position="172"/>
    </location>
</feature>
<feature type="turn" evidence="15">
    <location>
        <begin position="178"/>
        <end position="181"/>
    </location>
</feature>
<feature type="helix" evidence="15">
    <location>
        <begin position="184"/>
        <end position="187"/>
    </location>
</feature>
<feature type="helix" evidence="15">
    <location>
        <begin position="194"/>
        <end position="196"/>
    </location>
</feature>
<feature type="helix" evidence="15">
    <location>
        <begin position="199"/>
        <end position="206"/>
    </location>
</feature>
<feature type="helix" evidence="15">
    <location>
        <begin position="209"/>
        <end position="211"/>
    </location>
</feature>
<feature type="strand" evidence="15">
    <location>
        <begin position="215"/>
        <end position="223"/>
    </location>
</feature>
<feature type="strand" evidence="15">
    <location>
        <begin position="225"/>
        <end position="227"/>
    </location>
</feature>
<feature type="helix" evidence="15">
    <location>
        <begin position="256"/>
        <end position="259"/>
    </location>
</feature>
<feature type="strand" evidence="15">
    <location>
        <begin position="260"/>
        <end position="263"/>
    </location>
</feature>
<feature type="helix" evidence="15">
    <location>
        <begin position="283"/>
        <end position="311"/>
    </location>
</feature>
<feature type="helix" evidence="15">
    <location>
        <begin position="333"/>
        <end position="350"/>
    </location>
</feature>
<feature type="helix" evidence="15">
    <location>
        <begin position="352"/>
        <end position="367"/>
    </location>
</feature>
<feature type="helix" evidence="15">
    <location>
        <begin position="368"/>
        <end position="372"/>
    </location>
</feature>
<feature type="helix" evidence="15">
    <location>
        <begin position="379"/>
        <end position="383"/>
    </location>
</feature>
<feature type="helix" evidence="15">
    <location>
        <begin position="389"/>
        <end position="401"/>
    </location>
</feature>
<feature type="strand" evidence="15">
    <location>
        <begin position="406"/>
        <end position="416"/>
    </location>
</feature>
<feature type="strand" evidence="15">
    <location>
        <begin position="420"/>
        <end position="423"/>
    </location>
</feature>
<feature type="strand" evidence="15">
    <location>
        <begin position="425"/>
        <end position="427"/>
    </location>
</feature>
<feature type="strand" evidence="15">
    <location>
        <begin position="429"/>
        <end position="432"/>
    </location>
</feature>
<feature type="helix" evidence="15">
    <location>
        <begin position="434"/>
        <end position="436"/>
    </location>
</feature>
<feature type="helix" evidence="15">
    <location>
        <begin position="438"/>
        <end position="452"/>
    </location>
</feature>
<feature type="strand" evidence="15">
    <location>
        <begin position="456"/>
        <end position="458"/>
    </location>
</feature>
<feature type="turn" evidence="15">
    <location>
        <begin position="459"/>
        <end position="462"/>
    </location>
</feature>
<feature type="strand" evidence="15">
    <location>
        <begin position="463"/>
        <end position="465"/>
    </location>
</feature>
<feature type="helix" evidence="15">
    <location>
        <begin position="467"/>
        <end position="469"/>
    </location>
</feature>
<feature type="helix" evidence="15">
    <location>
        <begin position="482"/>
        <end position="484"/>
    </location>
</feature>
<feature type="strand" evidence="15">
    <location>
        <begin position="487"/>
        <end position="489"/>
    </location>
</feature>
<feature type="helix" evidence="15">
    <location>
        <begin position="490"/>
        <end position="494"/>
    </location>
</feature>
<feature type="helix" evidence="15">
    <location>
        <begin position="498"/>
        <end position="501"/>
    </location>
</feature>
<feature type="strand" evidence="15">
    <location>
        <begin position="505"/>
        <end position="509"/>
    </location>
</feature>
<feature type="strand" evidence="15">
    <location>
        <begin position="512"/>
        <end position="516"/>
    </location>
</feature>
<feature type="helix" evidence="15">
    <location>
        <begin position="518"/>
        <end position="527"/>
    </location>
</feature>
<feature type="helix" evidence="15">
    <location>
        <begin position="552"/>
        <end position="555"/>
    </location>
</feature>
<feature type="strand" evidence="15">
    <location>
        <begin position="556"/>
        <end position="558"/>
    </location>
</feature>
<feature type="helix" evidence="15">
    <location>
        <begin position="564"/>
        <end position="566"/>
    </location>
</feature>
<feature type="strand" evidence="15">
    <location>
        <begin position="569"/>
        <end position="576"/>
    </location>
</feature>
<feature type="helix" evidence="15">
    <location>
        <begin position="585"/>
        <end position="606"/>
    </location>
</feature>
<feature type="turn" evidence="15">
    <location>
        <begin position="608"/>
        <end position="610"/>
    </location>
</feature>
<feature type="strand" evidence="15">
    <location>
        <begin position="611"/>
        <end position="616"/>
    </location>
</feature>
<feature type="helix" evidence="15">
    <location>
        <begin position="620"/>
        <end position="625"/>
    </location>
</feature>
<feature type="turn" evidence="15">
    <location>
        <begin position="626"/>
        <end position="632"/>
    </location>
</feature>
<feature type="helix" evidence="15">
    <location>
        <begin position="633"/>
        <end position="636"/>
    </location>
</feature>
<feature type="helix" evidence="15">
    <location>
        <begin position="638"/>
        <end position="650"/>
    </location>
</feature>
<feature type="strand" evidence="15">
    <location>
        <begin position="655"/>
        <end position="659"/>
    </location>
</feature>
<feature type="helix" evidence="15">
    <location>
        <begin position="660"/>
        <end position="663"/>
    </location>
</feature>
<feature type="helix" evidence="15">
    <location>
        <begin position="666"/>
        <end position="689"/>
    </location>
</feature>
<feature type="helix" evidence="15">
    <location>
        <begin position="696"/>
        <end position="699"/>
    </location>
</feature>
<feature type="helix" evidence="15">
    <location>
        <begin position="702"/>
        <end position="723"/>
    </location>
</feature>
<feature type="helix" evidence="15">
    <location>
        <begin position="732"/>
        <end position="761"/>
    </location>
</feature>
<feature type="helix" evidence="15">
    <location>
        <begin position="767"/>
        <end position="787"/>
    </location>
</feature>
<feature type="helix" evidence="15">
    <location>
        <begin position="790"/>
        <end position="803"/>
    </location>
</feature>
<feature type="helix" evidence="15">
    <location>
        <begin position="827"/>
        <end position="834"/>
    </location>
</feature>
<feature type="helix" evidence="15">
    <location>
        <begin position="836"/>
        <end position="840"/>
    </location>
</feature>
<feature type="turn" evidence="15">
    <location>
        <begin position="843"/>
        <end position="845"/>
    </location>
</feature>
<feature type="helix" evidence="15">
    <location>
        <begin position="846"/>
        <end position="863"/>
    </location>
</feature>
<feature type="helix" evidence="15">
    <location>
        <begin position="873"/>
        <end position="876"/>
    </location>
</feature>
<feature type="helix" evidence="15">
    <location>
        <begin position="883"/>
        <end position="893"/>
    </location>
</feature>
<feature type="strand" evidence="15">
    <location>
        <begin position="899"/>
        <end position="904"/>
    </location>
</feature>
<feature type="strand" evidence="15">
    <location>
        <begin position="910"/>
        <end position="912"/>
    </location>
</feature>
<feature type="helix" evidence="15">
    <location>
        <begin position="913"/>
        <end position="917"/>
    </location>
</feature>
<feature type="helix" evidence="15">
    <location>
        <begin position="930"/>
        <end position="938"/>
    </location>
</feature>
<feature type="turn" evidence="15">
    <location>
        <begin position="941"/>
        <end position="943"/>
    </location>
</feature>
<feature type="strand" evidence="15">
    <location>
        <begin position="946"/>
        <end position="948"/>
    </location>
</feature>
<feature type="helix" evidence="15">
    <location>
        <begin position="953"/>
        <end position="961"/>
    </location>
</feature>
<feature type="helix" evidence="15">
    <location>
        <begin position="963"/>
        <end position="965"/>
    </location>
</feature>
<feature type="strand" evidence="15">
    <location>
        <begin position="968"/>
        <end position="970"/>
    </location>
</feature>
<feature type="turn" evidence="15">
    <location>
        <begin position="975"/>
        <end position="978"/>
    </location>
</feature>
<feature type="strand" evidence="15">
    <location>
        <begin position="979"/>
        <end position="981"/>
    </location>
</feature>
<feature type="strand" evidence="15">
    <location>
        <begin position="987"/>
        <end position="989"/>
    </location>
</feature>
<feature type="strand" evidence="15">
    <location>
        <begin position="992"/>
        <end position="995"/>
    </location>
</feature>
<feature type="strand" evidence="15">
    <location>
        <begin position="999"/>
        <end position="1001"/>
    </location>
</feature>
<feature type="helix" evidence="15">
    <location>
        <begin position="1006"/>
        <end position="1016"/>
    </location>
</feature>
<feature type="helix" evidence="15">
    <location>
        <begin position="1029"/>
        <end position="1032"/>
    </location>
</feature>
<feature type="turn" evidence="15">
    <location>
        <begin position="1033"/>
        <end position="1036"/>
    </location>
</feature>
<feature type="strand" evidence="15">
    <location>
        <begin position="1037"/>
        <end position="1040"/>
    </location>
</feature>
<feature type="turn" evidence="15">
    <location>
        <begin position="1041"/>
        <end position="1043"/>
    </location>
</feature>
<feature type="strand" evidence="15">
    <location>
        <begin position="1044"/>
        <end position="1054"/>
    </location>
</feature>
<feature type="helix" evidence="15">
    <location>
        <begin position="1060"/>
        <end position="1081"/>
    </location>
</feature>
<feature type="strand" evidence="15">
    <location>
        <begin position="1093"/>
        <end position="1096"/>
    </location>
</feature>
<feature type="helix" evidence="15">
    <location>
        <begin position="1100"/>
        <end position="1103"/>
    </location>
</feature>
<feature type="helix" evidence="15">
    <location>
        <begin position="1104"/>
        <end position="1107"/>
    </location>
</feature>
<feature type="helix" evidence="15">
    <location>
        <begin position="1109"/>
        <end position="1131"/>
    </location>
</feature>
<feature type="helix" evidence="15">
    <location>
        <begin position="1136"/>
        <end position="1160"/>
    </location>
</feature>
<feature type="helix" evidence="15">
    <location>
        <begin position="1166"/>
        <end position="1178"/>
    </location>
</feature>
<feature type="helix" evidence="15">
    <location>
        <begin position="1180"/>
        <end position="1191"/>
    </location>
</feature>
<feature type="helix" evidence="15">
    <location>
        <begin position="1198"/>
        <end position="1226"/>
    </location>
</feature>
<feature type="helix" evidence="15">
    <location>
        <begin position="1227"/>
        <end position="1230"/>
    </location>
</feature>
<feature type="helix" evidence="15">
    <location>
        <begin position="1234"/>
        <end position="1239"/>
    </location>
</feature>
<feature type="helix" evidence="15">
    <location>
        <begin position="1241"/>
        <end position="1256"/>
    </location>
</feature>
<feature type="helix" evidence="15">
    <location>
        <begin position="1258"/>
        <end position="1266"/>
    </location>
</feature>
<feature type="helix" evidence="15">
    <location>
        <begin position="1272"/>
        <end position="1281"/>
    </location>
</feature>
<dbReference type="EMBL" id="AY437867">
    <property type="protein sequence ID" value="AAR97888.1"/>
    <property type="molecule type" value="mRNA"/>
</dbReference>
<dbReference type="RefSeq" id="NP_001002025.1">
    <property type="nucleotide sequence ID" value="NM_001002025.1"/>
</dbReference>
<dbReference type="PDB" id="6V3F">
    <property type="method" value="EM"/>
    <property type="resolution" value="3.70 A"/>
    <property type="chains" value="A=21-1331"/>
</dbReference>
<dbReference type="PDB" id="6V3H">
    <property type="method" value="EM"/>
    <property type="resolution" value="3.50 A"/>
    <property type="chains" value="A=21-1331"/>
</dbReference>
<dbReference type="PDBsum" id="6V3F"/>
<dbReference type="PDBsum" id="6V3H"/>
<dbReference type="EMDB" id="EMD-21035"/>
<dbReference type="EMDB" id="EMD-21037"/>
<dbReference type="SMR" id="Q6T3U3"/>
<dbReference type="FunCoup" id="Q6T3U3">
    <property type="interactions" value="57"/>
</dbReference>
<dbReference type="STRING" id="10116.ENSRNOP00000065524"/>
<dbReference type="BindingDB" id="Q6T3U3"/>
<dbReference type="ChEMBL" id="CHEMBL5161"/>
<dbReference type="DrugCentral" id="Q6T3U3"/>
<dbReference type="GlyCosmos" id="Q6T3U3">
    <property type="glycosylation" value="17 sites, No reported glycans"/>
</dbReference>
<dbReference type="GlyGen" id="Q6T3U3">
    <property type="glycosylation" value="18 sites"/>
</dbReference>
<dbReference type="PhosphoSitePlus" id="Q6T3U3"/>
<dbReference type="PaxDb" id="10116-ENSRNOP00000065524"/>
<dbReference type="Ensembl" id="ENSRNOT00000075827.3">
    <property type="protein sequence ID" value="ENSRNOP00000065524.1"/>
    <property type="gene ID" value="ENSRNOG00000049955.3"/>
</dbReference>
<dbReference type="GeneID" id="432367"/>
<dbReference type="KEGG" id="rno:432367"/>
<dbReference type="AGR" id="RGD:1303135"/>
<dbReference type="CTD" id="29881"/>
<dbReference type="RGD" id="1303135">
    <property type="gene designation" value="Npc1l1"/>
</dbReference>
<dbReference type="eggNOG" id="KOG1933">
    <property type="taxonomic scope" value="Eukaryota"/>
</dbReference>
<dbReference type="GeneTree" id="ENSGT00940000159904"/>
<dbReference type="HOGENOM" id="CLU_002359_0_0_1"/>
<dbReference type="InParanoid" id="Q6T3U3"/>
<dbReference type="OMA" id="QVFPYTI"/>
<dbReference type="OrthoDB" id="63354at9989"/>
<dbReference type="PhylomeDB" id="Q6T3U3"/>
<dbReference type="Reactome" id="R-RNO-8963678">
    <property type="pathway name" value="Intestinal lipid absorption"/>
</dbReference>
<dbReference type="PRO" id="PR:Q6T3U3"/>
<dbReference type="Proteomes" id="UP000002494">
    <property type="component" value="Chromosome 14"/>
</dbReference>
<dbReference type="Bgee" id="ENSRNOG00000049955">
    <property type="expression patterns" value="Expressed in jejunum and 6 other cell types or tissues"/>
</dbReference>
<dbReference type="GO" id="GO:0016324">
    <property type="term" value="C:apical plasma membrane"/>
    <property type="evidence" value="ECO:0000314"/>
    <property type="project" value="UniProtKB"/>
</dbReference>
<dbReference type="GO" id="GO:0031526">
    <property type="term" value="C:brush border membrane"/>
    <property type="evidence" value="ECO:0000314"/>
    <property type="project" value="RGD"/>
</dbReference>
<dbReference type="GO" id="GO:0005886">
    <property type="term" value="C:plasma membrane"/>
    <property type="evidence" value="ECO:0000266"/>
    <property type="project" value="RGD"/>
</dbReference>
<dbReference type="GO" id="GO:0015485">
    <property type="term" value="F:cholesterol binding"/>
    <property type="evidence" value="ECO:0000266"/>
    <property type="project" value="RGD"/>
</dbReference>
<dbReference type="GO" id="GO:1901363">
    <property type="term" value="F:heterocyclic compound binding"/>
    <property type="evidence" value="ECO:0000353"/>
    <property type="project" value="RGD"/>
</dbReference>
<dbReference type="GO" id="GO:0005319">
    <property type="term" value="F:lipid transporter activity"/>
    <property type="evidence" value="ECO:0007669"/>
    <property type="project" value="InterPro"/>
</dbReference>
<dbReference type="GO" id="GO:0031489">
    <property type="term" value="F:myosin V binding"/>
    <property type="evidence" value="ECO:0000266"/>
    <property type="project" value="RGD"/>
</dbReference>
<dbReference type="GO" id="GO:0042803">
    <property type="term" value="F:protein homodimerization activity"/>
    <property type="evidence" value="ECO:0000250"/>
    <property type="project" value="UniProtKB"/>
</dbReference>
<dbReference type="GO" id="GO:0031267">
    <property type="term" value="F:small GTPase binding"/>
    <property type="evidence" value="ECO:0000266"/>
    <property type="project" value="RGD"/>
</dbReference>
<dbReference type="GO" id="GO:0008431">
    <property type="term" value="F:vitamin E binding"/>
    <property type="evidence" value="ECO:0000266"/>
    <property type="project" value="RGD"/>
</dbReference>
<dbReference type="GO" id="GO:0071501">
    <property type="term" value="P:cellular response to sterol depletion"/>
    <property type="evidence" value="ECO:0000266"/>
    <property type="project" value="RGD"/>
</dbReference>
<dbReference type="GO" id="GO:0006695">
    <property type="term" value="P:cholesterol biosynthetic process"/>
    <property type="evidence" value="ECO:0000266"/>
    <property type="project" value="RGD"/>
</dbReference>
<dbReference type="GO" id="GO:0042632">
    <property type="term" value="P:cholesterol homeostasis"/>
    <property type="evidence" value="ECO:0000266"/>
    <property type="project" value="RGD"/>
</dbReference>
<dbReference type="GO" id="GO:0070508">
    <property type="term" value="P:cholesterol import"/>
    <property type="evidence" value="ECO:0000314"/>
    <property type="project" value="UniProtKB"/>
</dbReference>
<dbReference type="GO" id="GO:0030301">
    <property type="term" value="P:cholesterol transport"/>
    <property type="evidence" value="ECO:0000266"/>
    <property type="project" value="RGD"/>
</dbReference>
<dbReference type="GO" id="GO:0030299">
    <property type="term" value="P:intestinal cholesterol absorption"/>
    <property type="evidence" value="ECO:0000266"/>
    <property type="project" value="RGD"/>
</dbReference>
<dbReference type="GO" id="GO:0042157">
    <property type="term" value="P:lipoprotein metabolic process"/>
    <property type="evidence" value="ECO:0000266"/>
    <property type="project" value="RGD"/>
</dbReference>
<dbReference type="GO" id="GO:0014850">
    <property type="term" value="P:response to muscle activity"/>
    <property type="evidence" value="ECO:0000270"/>
    <property type="project" value="RGD"/>
</dbReference>
<dbReference type="GO" id="GO:0009410">
    <property type="term" value="P:response to xenobiotic stimulus"/>
    <property type="evidence" value="ECO:0000270"/>
    <property type="project" value="RGD"/>
</dbReference>
<dbReference type="GO" id="GO:0015918">
    <property type="term" value="P:sterol transport"/>
    <property type="evidence" value="ECO:0000318"/>
    <property type="project" value="GO_Central"/>
</dbReference>
<dbReference type="GO" id="GO:0042360">
    <property type="term" value="P:vitamin E metabolic process"/>
    <property type="evidence" value="ECO:0000266"/>
    <property type="project" value="RGD"/>
</dbReference>
<dbReference type="GO" id="GO:0051180">
    <property type="term" value="P:vitamin transport"/>
    <property type="evidence" value="ECO:0000314"/>
    <property type="project" value="UniProtKB"/>
</dbReference>
<dbReference type="FunFam" id="1.20.1640.10:FF:000008">
    <property type="entry name" value="NPC intracellular cholesterol transporter 1"/>
    <property type="match status" value="1"/>
</dbReference>
<dbReference type="FunFam" id="1.20.1640.10:FF:000010">
    <property type="entry name" value="NPC intracellular cholesterol transporter 1"/>
    <property type="match status" value="1"/>
</dbReference>
<dbReference type="Gene3D" id="1.20.1640.10">
    <property type="entry name" value="Multidrug efflux transporter AcrB transmembrane domain"/>
    <property type="match status" value="2"/>
</dbReference>
<dbReference type="InterPro" id="IPR053958">
    <property type="entry name" value="HMGCR/SNAP/NPC1-like_SSD"/>
</dbReference>
<dbReference type="InterPro" id="IPR004765">
    <property type="entry name" value="NPC1-like"/>
</dbReference>
<dbReference type="InterPro" id="IPR053956">
    <property type="entry name" value="NPC1_MLD"/>
</dbReference>
<dbReference type="InterPro" id="IPR032190">
    <property type="entry name" value="NPC1_N"/>
</dbReference>
<dbReference type="InterPro" id="IPR000731">
    <property type="entry name" value="SSD"/>
</dbReference>
<dbReference type="NCBIfam" id="TIGR00917">
    <property type="entry name" value="2A060601"/>
    <property type="match status" value="1"/>
</dbReference>
<dbReference type="PANTHER" id="PTHR45727">
    <property type="entry name" value="NPC INTRACELLULAR CHOLESTEROL TRANSPORTER 1"/>
    <property type="match status" value="1"/>
</dbReference>
<dbReference type="PANTHER" id="PTHR45727:SF3">
    <property type="entry name" value="NPC1-LIKE INTRACELLULAR CHOLESTEROL TRANSPORTER 1"/>
    <property type="match status" value="1"/>
</dbReference>
<dbReference type="Pfam" id="PF22314">
    <property type="entry name" value="NPC1_MLD"/>
    <property type="match status" value="1"/>
</dbReference>
<dbReference type="Pfam" id="PF16414">
    <property type="entry name" value="NPC1_N"/>
    <property type="match status" value="1"/>
</dbReference>
<dbReference type="Pfam" id="PF12349">
    <property type="entry name" value="Sterol-sensing"/>
    <property type="match status" value="1"/>
</dbReference>
<dbReference type="SUPFAM" id="SSF82866">
    <property type="entry name" value="Multidrug efflux transporter AcrB transmembrane domain"/>
    <property type="match status" value="2"/>
</dbReference>
<dbReference type="PROSITE" id="PS50156">
    <property type="entry name" value="SSD"/>
    <property type="match status" value="1"/>
</dbReference>
<gene>
    <name evidence="14" type="primary">Npc1l1</name>
</gene>
<organism>
    <name type="scientific">Rattus norvegicus</name>
    <name type="common">Rat</name>
    <dbReference type="NCBI Taxonomy" id="10116"/>
    <lineage>
        <taxon>Eukaryota</taxon>
        <taxon>Metazoa</taxon>
        <taxon>Chordata</taxon>
        <taxon>Craniata</taxon>
        <taxon>Vertebrata</taxon>
        <taxon>Euteleostomi</taxon>
        <taxon>Mammalia</taxon>
        <taxon>Eutheria</taxon>
        <taxon>Euarchontoglires</taxon>
        <taxon>Glires</taxon>
        <taxon>Rodentia</taxon>
        <taxon>Myomorpha</taxon>
        <taxon>Muroidea</taxon>
        <taxon>Muridae</taxon>
        <taxon>Murinae</taxon>
        <taxon>Rattus</taxon>
    </lineage>
</organism>
<sequence length="1331" mass="146415">MAAAWLGWLLWALLLSAAQGELYTPKHEAGVCTFYEECGKNPELSGGLTSLSNVSCLSNTPARHVTGEHLALLQRICPRLYNGPNTTFACCSTKQLLSLESSMSITKALLTRCPACSDNFVSLHCHNTCSPDQSLFINVTRVVERGAGEPPAVVAYEAFYQRSFAEKAYESCSQVRIPAAASLAVGSMCGVYGSALCNAQRWLNFQGDTGNGLAPLDITFHLLEPGQALPDGIQPLNGKIAPCNESQGDDSAVCSCQDCAASCPVIPPPEALRPSFYMGRMPGWLALIIIFTAVFVLLSAVLVRLRVVSNRNKNKAEGPQEAPKLPHKHKLSPHTILGRFFQNWGTRVASWPLTVLALSFIVVIALAAGLTFIELTTDPVELWSAPKSQARKEKSFHDEHFGPFFRTNQIFVTARNRSSYKYDSLLLGSKNFSGILSLDFLLELLELQERLRHLQVWSPEAERNISLQDICYAPLNPYNTSLSDCCVNSLLQYFQNNRTLLMLTANQTLNGQTSLVDWKDHFLYCANAPLTFKDGTSLALSCMADYGAPVFPFLAVGGYQGTDYSEAEALIITFSLNNYPADDPRMAQAKLWEEAFLKEMESFQRNTSDKFQVAFSAERSLEDEINRTTIQDLPVFAVSYIIVFLYISLALGSYSRCSRVAVESKATLGLGGVIVVLGAVLAAMGFYSYLGVPSSLVIIQVVPFLVLAVGADNIFIFVLEYQRLPRMPGEQREAHIGRTLGSVAPSMLLCSLSEAICFFLGALTPMPAVRTFALTSGLAIILDFLLQMTAFVALLSLDSKRQEASRPDVLCCFSTRKLPPPKEKEGLLLRFFRKIYAPFLLHRFIRPVVMLLFLTLFGANLYLMCNINVGLDQELALPKDSYLIDYFLFLNRYLEVGPPVYFVTTSGFNFSSEAGMNATCSSAGCKSFSLTQKIQYASEFPDQSYVAIAASSWVDDFIDWLTPSSSCCRLYIRGPHKDEFCPSTDTSFNCLKNCMNRTLGPVRPTAEQFHKYLPWFLNDPPNIRCPKGGLAAYRTSVNLSSDGQVIASQFMAYHKPLRNSQDFTEALRASRLLAANITADLRKVPGTDPNFEVFPYTISNVFYQQYLTVLPEGIFTLALCFVPTFVVCYLLLGLDMCSGILNLLSIIMILVDTIGLMAVWGISYNAVSLINLVTAVGMSVEFVSHITRSFAVSTKPTRLERAKDATVFMGSAVFAGVAMTNFPGILILGFAQAQLIQIFFFRLNLLITLLGLLHGLVFLPVVLSYLGPDVNQALVQEEKLASEAAVAPEPSCPQYPSPADADANVNYGFAPELAHGANAARSSLPKSDQKF</sequence>